<accession>Q66C52</accession>
<organism>
    <name type="scientific">Yersinia pseudotuberculosis serotype I (strain IP32953)</name>
    <dbReference type="NCBI Taxonomy" id="273123"/>
    <lineage>
        <taxon>Bacteria</taxon>
        <taxon>Pseudomonadati</taxon>
        <taxon>Pseudomonadota</taxon>
        <taxon>Gammaproteobacteria</taxon>
        <taxon>Enterobacterales</taxon>
        <taxon>Yersiniaceae</taxon>
        <taxon>Yersinia</taxon>
    </lineage>
</organism>
<dbReference type="EC" id="4.3.2.10" evidence="1"/>
<dbReference type="EC" id="3.5.1.2" evidence="1"/>
<dbReference type="EMBL" id="BX936398">
    <property type="protein sequence ID" value="CAH20797.1"/>
    <property type="molecule type" value="Genomic_DNA"/>
</dbReference>
<dbReference type="RefSeq" id="WP_002211892.1">
    <property type="nucleotide sequence ID" value="NZ_CP009712.1"/>
</dbReference>
<dbReference type="SMR" id="Q66C52"/>
<dbReference type="GeneID" id="57977023"/>
<dbReference type="KEGG" id="ypo:BZ17_957"/>
<dbReference type="KEGG" id="yps:YPTB1558"/>
<dbReference type="PATRIC" id="fig|273123.14.peg.1017"/>
<dbReference type="UniPathway" id="UPA00031">
    <property type="reaction ID" value="UER00010"/>
</dbReference>
<dbReference type="Proteomes" id="UP000001011">
    <property type="component" value="Chromosome"/>
</dbReference>
<dbReference type="GO" id="GO:0005737">
    <property type="term" value="C:cytoplasm"/>
    <property type="evidence" value="ECO:0007669"/>
    <property type="project" value="UniProtKB-SubCell"/>
</dbReference>
<dbReference type="GO" id="GO:0004359">
    <property type="term" value="F:glutaminase activity"/>
    <property type="evidence" value="ECO:0007669"/>
    <property type="project" value="UniProtKB-EC"/>
</dbReference>
<dbReference type="GO" id="GO:0000107">
    <property type="term" value="F:imidazoleglycerol-phosphate synthase activity"/>
    <property type="evidence" value="ECO:0007669"/>
    <property type="project" value="UniProtKB-UniRule"/>
</dbReference>
<dbReference type="GO" id="GO:0016829">
    <property type="term" value="F:lyase activity"/>
    <property type="evidence" value="ECO:0007669"/>
    <property type="project" value="UniProtKB-KW"/>
</dbReference>
<dbReference type="GO" id="GO:0000105">
    <property type="term" value="P:L-histidine biosynthetic process"/>
    <property type="evidence" value="ECO:0007669"/>
    <property type="project" value="UniProtKB-UniRule"/>
</dbReference>
<dbReference type="CDD" id="cd01748">
    <property type="entry name" value="GATase1_IGP_Synthase"/>
    <property type="match status" value="1"/>
</dbReference>
<dbReference type="FunFam" id="3.40.50.880:FF:000009">
    <property type="entry name" value="Imidazole glycerol phosphate synthase subunit HisH"/>
    <property type="match status" value="1"/>
</dbReference>
<dbReference type="Gene3D" id="3.40.50.880">
    <property type="match status" value="1"/>
</dbReference>
<dbReference type="HAMAP" id="MF_00278">
    <property type="entry name" value="HisH"/>
    <property type="match status" value="1"/>
</dbReference>
<dbReference type="InterPro" id="IPR029062">
    <property type="entry name" value="Class_I_gatase-like"/>
</dbReference>
<dbReference type="InterPro" id="IPR017926">
    <property type="entry name" value="GATASE"/>
</dbReference>
<dbReference type="InterPro" id="IPR010139">
    <property type="entry name" value="Imidazole-glycPsynth_HisH"/>
</dbReference>
<dbReference type="NCBIfam" id="TIGR01855">
    <property type="entry name" value="IMP_synth_hisH"/>
    <property type="match status" value="1"/>
</dbReference>
<dbReference type="PANTHER" id="PTHR42701">
    <property type="entry name" value="IMIDAZOLE GLYCEROL PHOSPHATE SYNTHASE SUBUNIT HISH"/>
    <property type="match status" value="1"/>
</dbReference>
<dbReference type="PANTHER" id="PTHR42701:SF1">
    <property type="entry name" value="IMIDAZOLE GLYCEROL PHOSPHATE SYNTHASE SUBUNIT HISH"/>
    <property type="match status" value="1"/>
</dbReference>
<dbReference type="Pfam" id="PF00117">
    <property type="entry name" value="GATase"/>
    <property type="match status" value="1"/>
</dbReference>
<dbReference type="PIRSF" id="PIRSF000495">
    <property type="entry name" value="Amidotransf_hisH"/>
    <property type="match status" value="1"/>
</dbReference>
<dbReference type="PRINTS" id="PR00096">
    <property type="entry name" value="GATASE"/>
</dbReference>
<dbReference type="SUPFAM" id="SSF52317">
    <property type="entry name" value="Class I glutamine amidotransferase-like"/>
    <property type="match status" value="1"/>
</dbReference>
<dbReference type="PROSITE" id="PS51273">
    <property type="entry name" value="GATASE_TYPE_1"/>
    <property type="match status" value="1"/>
</dbReference>
<reference key="1">
    <citation type="journal article" date="2004" name="Proc. Natl. Acad. Sci. U.S.A.">
        <title>Insights into the evolution of Yersinia pestis through whole-genome comparison with Yersinia pseudotuberculosis.</title>
        <authorList>
            <person name="Chain P.S.G."/>
            <person name="Carniel E."/>
            <person name="Larimer F.W."/>
            <person name="Lamerdin J."/>
            <person name="Stoutland P.O."/>
            <person name="Regala W.M."/>
            <person name="Georgescu A.M."/>
            <person name="Vergez L.M."/>
            <person name="Land M.L."/>
            <person name="Motin V.L."/>
            <person name="Brubaker R.R."/>
            <person name="Fowler J."/>
            <person name="Hinnebusch J."/>
            <person name="Marceau M."/>
            <person name="Medigue C."/>
            <person name="Simonet M."/>
            <person name="Chenal-Francisque V."/>
            <person name="Souza B."/>
            <person name="Dacheux D."/>
            <person name="Elliott J.M."/>
            <person name="Derbise A."/>
            <person name="Hauser L.J."/>
            <person name="Garcia E."/>
        </authorList>
    </citation>
    <scope>NUCLEOTIDE SEQUENCE [LARGE SCALE GENOMIC DNA]</scope>
    <source>
        <strain>IP32953</strain>
    </source>
</reference>
<name>HIS5_YERPS</name>
<comment type="function">
    <text evidence="1">IGPS catalyzes the conversion of PRFAR and glutamine to IGP, AICAR and glutamate. The HisH subunit catalyzes the hydrolysis of glutamine to glutamate and ammonia as part of the synthesis of IGP and AICAR. The resulting ammonia molecule is channeled to the active site of HisF.</text>
</comment>
<comment type="catalytic activity">
    <reaction evidence="1">
        <text>5-[(5-phospho-1-deoxy-D-ribulos-1-ylimino)methylamino]-1-(5-phospho-beta-D-ribosyl)imidazole-4-carboxamide + L-glutamine = D-erythro-1-(imidazol-4-yl)glycerol 3-phosphate + 5-amino-1-(5-phospho-beta-D-ribosyl)imidazole-4-carboxamide + L-glutamate + H(+)</text>
        <dbReference type="Rhea" id="RHEA:24793"/>
        <dbReference type="ChEBI" id="CHEBI:15378"/>
        <dbReference type="ChEBI" id="CHEBI:29985"/>
        <dbReference type="ChEBI" id="CHEBI:58278"/>
        <dbReference type="ChEBI" id="CHEBI:58359"/>
        <dbReference type="ChEBI" id="CHEBI:58475"/>
        <dbReference type="ChEBI" id="CHEBI:58525"/>
        <dbReference type="EC" id="4.3.2.10"/>
    </reaction>
</comment>
<comment type="catalytic activity">
    <reaction evidence="1">
        <text>L-glutamine + H2O = L-glutamate + NH4(+)</text>
        <dbReference type="Rhea" id="RHEA:15889"/>
        <dbReference type="ChEBI" id="CHEBI:15377"/>
        <dbReference type="ChEBI" id="CHEBI:28938"/>
        <dbReference type="ChEBI" id="CHEBI:29985"/>
        <dbReference type="ChEBI" id="CHEBI:58359"/>
        <dbReference type="EC" id="3.5.1.2"/>
    </reaction>
</comment>
<comment type="pathway">
    <text evidence="1">Amino-acid biosynthesis; L-histidine biosynthesis; L-histidine from 5-phospho-alpha-D-ribose 1-diphosphate: step 5/9.</text>
</comment>
<comment type="subunit">
    <text evidence="1">Heterodimer of HisH and HisF.</text>
</comment>
<comment type="subcellular location">
    <subcellularLocation>
        <location evidence="1">Cytoplasm</location>
    </subcellularLocation>
</comment>
<feature type="chain" id="PRO_0000152453" description="Imidazole glycerol phosphate synthase subunit HisH">
    <location>
        <begin position="1"/>
        <end position="196"/>
    </location>
</feature>
<feature type="domain" description="Glutamine amidotransferase type-1" evidence="1">
    <location>
        <begin position="2"/>
        <end position="196"/>
    </location>
</feature>
<feature type="active site" description="Nucleophile" evidence="1">
    <location>
        <position position="77"/>
    </location>
</feature>
<feature type="active site" evidence="1">
    <location>
        <position position="178"/>
    </location>
</feature>
<feature type="active site" evidence="1">
    <location>
        <position position="180"/>
    </location>
</feature>
<gene>
    <name evidence="1" type="primary">hisH</name>
    <name type="ordered locus">YPTB1558</name>
</gene>
<evidence type="ECO:0000255" key="1">
    <source>
        <dbReference type="HAMAP-Rule" id="MF_00278"/>
    </source>
</evidence>
<proteinExistence type="inferred from homology"/>
<sequence>MDVVILDTGCANLSSVTYAVQRLGYTPVISRDPAVVLRADKLFMPGVGTAHAAMEQLRQRELIELIKSCTQPVLGICLGMQLLATSSEESGGITTLGMIDAPVKKMTDFGLPLPHMGWNQITAQAGNHLFRGIPDGTYFYFVHGYAMPICPNTIAQTNYGEPFTAAVEKDNFFGVQFHPERSGAAGAQLMKNFLEM</sequence>
<keyword id="KW-0028">Amino-acid biosynthesis</keyword>
<keyword id="KW-0963">Cytoplasm</keyword>
<keyword id="KW-0315">Glutamine amidotransferase</keyword>
<keyword id="KW-0368">Histidine biosynthesis</keyword>
<keyword id="KW-0378">Hydrolase</keyword>
<keyword id="KW-0456">Lyase</keyword>
<protein>
    <recommendedName>
        <fullName evidence="1">Imidazole glycerol phosphate synthase subunit HisH</fullName>
        <ecNumber evidence="1">4.3.2.10</ecNumber>
    </recommendedName>
    <alternativeName>
        <fullName evidence="1">IGP synthase glutaminase subunit</fullName>
        <ecNumber evidence="1">3.5.1.2</ecNumber>
    </alternativeName>
    <alternativeName>
        <fullName evidence="1">IGP synthase subunit HisH</fullName>
    </alternativeName>
    <alternativeName>
        <fullName evidence="1">ImGP synthase subunit HisH</fullName>
        <shortName evidence="1">IGPS subunit HisH</shortName>
    </alternativeName>
</protein>